<gene>
    <name evidence="1" type="primary">hldE</name>
    <name type="ordered locus">ECA3584</name>
</gene>
<protein>
    <recommendedName>
        <fullName evidence="1">Bifunctional protein HldE</fullName>
    </recommendedName>
    <domain>
        <recommendedName>
            <fullName evidence="1">D-beta-D-heptose 7-phosphate kinase</fullName>
            <ecNumber evidence="1">2.7.1.167</ecNumber>
        </recommendedName>
        <alternativeName>
            <fullName evidence="1">D-beta-D-heptose 7-phosphotransferase</fullName>
        </alternativeName>
        <alternativeName>
            <fullName evidence="1">D-glycero-beta-D-manno-heptose-7-phosphate kinase</fullName>
        </alternativeName>
    </domain>
    <domain>
        <recommendedName>
            <fullName evidence="1">D-beta-D-heptose 1-phosphate adenylyltransferase</fullName>
            <ecNumber evidence="1">2.7.7.70</ecNumber>
        </recommendedName>
        <alternativeName>
            <fullName evidence="1">D-glycero-beta-D-manno-heptose 1-phosphate adenylyltransferase</fullName>
        </alternativeName>
    </domain>
</protein>
<feature type="chain" id="PRO_0000255756" description="Bifunctional protein HldE">
    <location>
        <begin position="1"/>
        <end position="478"/>
    </location>
</feature>
<feature type="region of interest" description="Ribokinase">
    <location>
        <begin position="1"/>
        <end position="318"/>
    </location>
</feature>
<feature type="region of interest" description="Cytidylyltransferase">
    <location>
        <begin position="344"/>
        <end position="478"/>
    </location>
</feature>
<feature type="active site" evidence="1">
    <location>
        <position position="264"/>
    </location>
</feature>
<feature type="binding site" evidence="1">
    <location>
        <begin position="195"/>
        <end position="198"/>
    </location>
    <ligand>
        <name>ATP</name>
        <dbReference type="ChEBI" id="CHEBI:30616"/>
    </ligand>
</feature>
<reference key="1">
    <citation type="journal article" date="2004" name="Proc. Natl. Acad. Sci. U.S.A.">
        <title>Genome sequence of the enterobacterial phytopathogen Erwinia carotovora subsp. atroseptica and characterization of virulence factors.</title>
        <authorList>
            <person name="Bell K.S."/>
            <person name="Sebaihia M."/>
            <person name="Pritchard L."/>
            <person name="Holden M.T.G."/>
            <person name="Hyman L.J."/>
            <person name="Holeva M.C."/>
            <person name="Thomson N.R."/>
            <person name="Bentley S.D."/>
            <person name="Churcher L.J.C."/>
            <person name="Mungall K."/>
            <person name="Atkin R."/>
            <person name="Bason N."/>
            <person name="Brooks K."/>
            <person name="Chillingworth T."/>
            <person name="Clark K."/>
            <person name="Doggett J."/>
            <person name="Fraser A."/>
            <person name="Hance Z."/>
            <person name="Hauser H."/>
            <person name="Jagels K."/>
            <person name="Moule S."/>
            <person name="Norbertczak H."/>
            <person name="Ormond D."/>
            <person name="Price C."/>
            <person name="Quail M.A."/>
            <person name="Sanders M."/>
            <person name="Walker D."/>
            <person name="Whitehead S."/>
            <person name="Salmond G.P.C."/>
            <person name="Birch P.R.J."/>
            <person name="Parkhill J."/>
            <person name="Toth I.K."/>
        </authorList>
    </citation>
    <scope>NUCLEOTIDE SEQUENCE [LARGE SCALE GENOMIC DNA]</scope>
    <source>
        <strain>SCRI 1043 / ATCC BAA-672</strain>
    </source>
</reference>
<comment type="function">
    <text evidence="1">Catalyzes the phosphorylation of D-glycero-D-manno-heptose 7-phosphate at the C-1 position to selectively form D-glycero-beta-D-manno-heptose-1,7-bisphosphate.</text>
</comment>
<comment type="function">
    <text evidence="1">Catalyzes the ADP transfer from ATP to D-glycero-beta-D-manno-heptose 1-phosphate, yielding ADP-D-glycero-beta-D-manno-heptose.</text>
</comment>
<comment type="catalytic activity">
    <reaction evidence="1">
        <text>D-glycero-beta-D-manno-heptose 7-phosphate + ATP = D-glycero-beta-D-manno-heptose 1,7-bisphosphate + ADP + H(+)</text>
        <dbReference type="Rhea" id="RHEA:27473"/>
        <dbReference type="ChEBI" id="CHEBI:15378"/>
        <dbReference type="ChEBI" id="CHEBI:30616"/>
        <dbReference type="ChEBI" id="CHEBI:60204"/>
        <dbReference type="ChEBI" id="CHEBI:60208"/>
        <dbReference type="ChEBI" id="CHEBI:456216"/>
        <dbReference type="EC" id="2.7.1.167"/>
    </reaction>
</comment>
<comment type="catalytic activity">
    <reaction evidence="1">
        <text>D-glycero-beta-D-manno-heptose 1-phosphate + ATP + H(+) = ADP-D-glycero-beta-D-manno-heptose + diphosphate</text>
        <dbReference type="Rhea" id="RHEA:27465"/>
        <dbReference type="ChEBI" id="CHEBI:15378"/>
        <dbReference type="ChEBI" id="CHEBI:30616"/>
        <dbReference type="ChEBI" id="CHEBI:33019"/>
        <dbReference type="ChEBI" id="CHEBI:59967"/>
        <dbReference type="ChEBI" id="CHEBI:61593"/>
        <dbReference type="EC" id="2.7.7.70"/>
    </reaction>
</comment>
<comment type="pathway">
    <text evidence="1">Nucleotide-sugar biosynthesis; ADP-L-glycero-beta-D-manno-heptose biosynthesis; ADP-L-glycero-beta-D-manno-heptose from D-glycero-beta-D-manno-heptose 7-phosphate: step 1/4.</text>
</comment>
<comment type="pathway">
    <text evidence="1">Nucleotide-sugar biosynthesis; ADP-L-glycero-beta-D-manno-heptose biosynthesis; ADP-L-glycero-beta-D-manno-heptose from D-glycero-beta-D-manno-heptose 7-phosphate: step 3/4.</text>
</comment>
<comment type="subunit">
    <text evidence="1">Homodimer.</text>
</comment>
<comment type="similarity">
    <text evidence="1">In the N-terminal section; belongs to the carbohydrate kinase PfkB family.</text>
</comment>
<comment type="similarity">
    <text evidence="1">In the C-terminal section; belongs to the cytidylyltransferase family.</text>
</comment>
<comment type="sequence caution" evidence="2">
    <conflict type="erroneous initiation">
        <sequence resource="EMBL-CDS" id="CAG76482"/>
    </conflict>
</comment>
<keyword id="KW-0067">ATP-binding</keyword>
<keyword id="KW-0119">Carbohydrate metabolism</keyword>
<keyword id="KW-0418">Kinase</keyword>
<keyword id="KW-0511">Multifunctional enzyme</keyword>
<keyword id="KW-0547">Nucleotide-binding</keyword>
<keyword id="KW-0548">Nucleotidyltransferase</keyword>
<keyword id="KW-1185">Reference proteome</keyword>
<keyword id="KW-0808">Transferase</keyword>
<proteinExistence type="inferred from homology"/>
<evidence type="ECO:0000255" key="1">
    <source>
        <dbReference type="HAMAP-Rule" id="MF_01603"/>
    </source>
</evidence>
<evidence type="ECO:0000305" key="2"/>
<organism>
    <name type="scientific">Pectobacterium atrosepticum (strain SCRI 1043 / ATCC BAA-672)</name>
    <name type="common">Erwinia carotovora subsp. atroseptica</name>
    <dbReference type="NCBI Taxonomy" id="218491"/>
    <lineage>
        <taxon>Bacteria</taxon>
        <taxon>Pseudomonadati</taxon>
        <taxon>Pseudomonadota</taxon>
        <taxon>Gammaproteobacteria</taxon>
        <taxon>Enterobacterales</taxon>
        <taxon>Pectobacteriaceae</taxon>
        <taxon>Pectobacterium</taxon>
    </lineage>
</organism>
<name>HLDE_PECAS</name>
<sequence length="478" mass="50990">MKVTLPDFRQAGVLVVGDVMLDRYWYGPTSRISPEAPVPVVKVDTIEERPGGAANVAMNIAALGAGSRLVGLTGVDDAARALNAKLGEVNVKCDFVSVPTHPTITKLRVLSRNQQLIRLDFEEGFEGIDPQPIIERIQQALPEIGALVLSDYAKGALAHVQTMIQTAKAAGVPVLIDPKGTDFSRYRGATLLTPNLSEFEAVAGRSKTEEELVERGMQLVADYELSALLITRSEQGMTLLQPGKAPLHLPTLAQEVYDVTGAGDTVIGVLAAALAAGNSLEEACFLANAAAGVVVGKLGTSTVTPIELENAIRGRADTGFGVMTEEQLKHAVELARQRGEKIVMTNGCFDILHAGHVSYLANARKLGDRLIVAVNSDASTKRLKGPTRPVNPLPQRMIVLGALEAVDWVVPFEEDTPQRLIASILPDILVKGGDYQPHEIAGSEEVWANGGEVKVLNFEDGCSTTNIINMIKASTSQS</sequence>
<dbReference type="EC" id="2.7.1.167" evidence="1"/>
<dbReference type="EC" id="2.7.7.70" evidence="1"/>
<dbReference type="EMBL" id="BX950851">
    <property type="protein sequence ID" value="CAG76482.1"/>
    <property type="status" value="ALT_INIT"/>
    <property type="molecule type" value="Genomic_DNA"/>
</dbReference>
<dbReference type="RefSeq" id="WP_039296636.1">
    <property type="nucleotide sequence ID" value="NC_004547.2"/>
</dbReference>
<dbReference type="SMR" id="Q6D164"/>
<dbReference type="STRING" id="218491.ECA3584"/>
<dbReference type="KEGG" id="eca:ECA3584"/>
<dbReference type="PATRIC" id="fig|218491.5.peg.3634"/>
<dbReference type="eggNOG" id="COG0615">
    <property type="taxonomic scope" value="Bacteria"/>
</dbReference>
<dbReference type="eggNOG" id="COG2870">
    <property type="taxonomic scope" value="Bacteria"/>
</dbReference>
<dbReference type="HOGENOM" id="CLU_021150_2_1_6"/>
<dbReference type="OrthoDB" id="9802794at2"/>
<dbReference type="UniPathway" id="UPA00356">
    <property type="reaction ID" value="UER00437"/>
</dbReference>
<dbReference type="UniPathway" id="UPA00356">
    <property type="reaction ID" value="UER00439"/>
</dbReference>
<dbReference type="Proteomes" id="UP000007966">
    <property type="component" value="Chromosome"/>
</dbReference>
<dbReference type="GO" id="GO:0005829">
    <property type="term" value="C:cytosol"/>
    <property type="evidence" value="ECO:0007669"/>
    <property type="project" value="TreeGrafter"/>
</dbReference>
<dbReference type="GO" id="GO:0005524">
    <property type="term" value="F:ATP binding"/>
    <property type="evidence" value="ECO:0007669"/>
    <property type="project" value="UniProtKB-UniRule"/>
</dbReference>
<dbReference type="GO" id="GO:0033785">
    <property type="term" value="F:heptose 7-phosphate kinase activity"/>
    <property type="evidence" value="ECO:0007669"/>
    <property type="project" value="UniProtKB-UniRule"/>
</dbReference>
<dbReference type="GO" id="GO:0033786">
    <property type="term" value="F:heptose-1-phosphate adenylyltransferase activity"/>
    <property type="evidence" value="ECO:0007669"/>
    <property type="project" value="UniProtKB-UniRule"/>
</dbReference>
<dbReference type="GO" id="GO:0016773">
    <property type="term" value="F:phosphotransferase activity, alcohol group as acceptor"/>
    <property type="evidence" value="ECO:0007669"/>
    <property type="project" value="InterPro"/>
</dbReference>
<dbReference type="GO" id="GO:0097171">
    <property type="term" value="P:ADP-L-glycero-beta-D-manno-heptose biosynthetic process"/>
    <property type="evidence" value="ECO:0007669"/>
    <property type="project" value="UniProtKB-UniPathway"/>
</dbReference>
<dbReference type="CDD" id="cd01172">
    <property type="entry name" value="RfaE_like"/>
    <property type="match status" value="1"/>
</dbReference>
<dbReference type="FunFam" id="3.40.1190.20:FF:000002">
    <property type="entry name" value="Bifunctional protein HldE"/>
    <property type="match status" value="1"/>
</dbReference>
<dbReference type="FunFam" id="3.40.50.620:FF:000028">
    <property type="entry name" value="Bifunctional protein HldE"/>
    <property type="match status" value="1"/>
</dbReference>
<dbReference type="Gene3D" id="3.40.1190.20">
    <property type="match status" value="1"/>
</dbReference>
<dbReference type="Gene3D" id="3.40.50.620">
    <property type="entry name" value="HUPs"/>
    <property type="match status" value="1"/>
</dbReference>
<dbReference type="HAMAP" id="MF_01603">
    <property type="entry name" value="HldE"/>
    <property type="match status" value="1"/>
</dbReference>
<dbReference type="InterPro" id="IPR023030">
    <property type="entry name" value="Bifunc_HldE"/>
</dbReference>
<dbReference type="InterPro" id="IPR002173">
    <property type="entry name" value="Carboh/pur_kinase_PfkB_CS"/>
</dbReference>
<dbReference type="InterPro" id="IPR004821">
    <property type="entry name" value="Cyt_trans-like"/>
</dbReference>
<dbReference type="InterPro" id="IPR011611">
    <property type="entry name" value="PfkB_dom"/>
</dbReference>
<dbReference type="InterPro" id="IPR011913">
    <property type="entry name" value="RfaE_dom_I"/>
</dbReference>
<dbReference type="InterPro" id="IPR011914">
    <property type="entry name" value="RfaE_dom_II"/>
</dbReference>
<dbReference type="InterPro" id="IPR029056">
    <property type="entry name" value="Ribokinase-like"/>
</dbReference>
<dbReference type="InterPro" id="IPR014729">
    <property type="entry name" value="Rossmann-like_a/b/a_fold"/>
</dbReference>
<dbReference type="NCBIfam" id="TIGR00125">
    <property type="entry name" value="cyt_tran_rel"/>
    <property type="match status" value="1"/>
</dbReference>
<dbReference type="NCBIfam" id="NF008454">
    <property type="entry name" value="PRK11316.1"/>
    <property type="match status" value="1"/>
</dbReference>
<dbReference type="NCBIfam" id="TIGR02198">
    <property type="entry name" value="rfaE_dom_I"/>
    <property type="match status" value="1"/>
</dbReference>
<dbReference type="NCBIfam" id="TIGR02199">
    <property type="entry name" value="rfaE_dom_II"/>
    <property type="match status" value="1"/>
</dbReference>
<dbReference type="PANTHER" id="PTHR46969">
    <property type="entry name" value="BIFUNCTIONAL PROTEIN HLDE"/>
    <property type="match status" value="1"/>
</dbReference>
<dbReference type="PANTHER" id="PTHR46969:SF1">
    <property type="entry name" value="BIFUNCTIONAL PROTEIN HLDE"/>
    <property type="match status" value="1"/>
</dbReference>
<dbReference type="Pfam" id="PF01467">
    <property type="entry name" value="CTP_transf_like"/>
    <property type="match status" value="1"/>
</dbReference>
<dbReference type="Pfam" id="PF00294">
    <property type="entry name" value="PfkB"/>
    <property type="match status" value="1"/>
</dbReference>
<dbReference type="SUPFAM" id="SSF52374">
    <property type="entry name" value="Nucleotidylyl transferase"/>
    <property type="match status" value="1"/>
</dbReference>
<dbReference type="SUPFAM" id="SSF53613">
    <property type="entry name" value="Ribokinase-like"/>
    <property type="match status" value="1"/>
</dbReference>
<dbReference type="PROSITE" id="PS00583">
    <property type="entry name" value="PFKB_KINASES_1"/>
    <property type="match status" value="1"/>
</dbReference>
<accession>Q6D164</accession>